<reference key="1">
    <citation type="journal article" date="2001" name="Nature">
        <title>Complete genome sequence of a multiple drug resistant Salmonella enterica serovar Typhi CT18.</title>
        <authorList>
            <person name="Parkhill J."/>
            <person name="Dougan G."/>
            <person name="James K.D."/>
            <person name="Thomson N.R."/>
            <person name="Pickard D."/>
            <person name="Wain J."/>
            <person name="Churcher C.M."/>
            <person name="Mungall K.L."/>
            <person name="Bentley S.D."/>
            <person name="Holden M.T.G."/>
            <person name="Sebaihia M."/>
            <person name="Baker S."/>
            <person name="Basham D."/>
            <person name="Brooks K."/>
            <person name="Chillingworth T."/>
            <person name="Connerton P."/>
            <person name="Cronin A."/>
            <person name="Davis P."/>
            <person name="Davies R.M."/>
            <person name="Dowd L."/>
            <person name="White N."/>
            <person name="Farrar J."/>
            <person name="Feltwell T."/>
            <person name="Hamlin N."/>
            <person name="Haque A."/>
            <person name="Hien T.T."/>
            <person name="Holroyd S."/>
            <person name="Jagels K."/>
            <person name="Krogh A."/>
            <person name="Larsen T.S."/>
            <person name="Leather S."/>
            <person name="Moule S."/>
            <person name="O'Gaora P."/>
            <person name="Parry C."/>
            <person name="Quail M.A."/>
            <person name="Rutherford K.M."/>
            <person name="Simmonds M."/>
            <person name="Skelton J."/>
            <person name="Stevens K."/>
            <person name="Whitehead S."/>
            <person name="Barrell B.G."/>
        </authorList>
    </citation>
    <scope>NUCLEOTIDE SEQUENCE [LARGE SCALE GENOMIC DNA]</scope>
    <source>
        <strain>CT18</strain>
    </source>
</reference>
<reference key="2">
    <citation type="journal article" date="2003" name="J. Bacteriol.">
        <title>Comparative genomics of Salmonella enterica serovar Typhi strains Ty2 and CT18.</title>
        <authorList>
            <person name="Deng W."/>
            <person name="Liou S.-R."/>
            <person name="Plunkett G. III"/>
            <person name="Mayhew G.F."/>
            <person name="Rose D.J."/>
            <person name="Burland V."/>
            <person name="Kodoyianni V."/>
            <person name="Schwartz D.C."/>
            <person name="Blattner F.R."/>
        </authorList>
    </citation>
    <scope>NUCLEOTIDE SEQUENCE [LARGE SCALE GENOMIC DNA]</scope>
    <source>
        <strain>ATCC 700931 / Ty2</strain>
    </source>
</reference>
<name>GNGF_SALTI</name>
<proteinExistence type="inferred from homology"/>
<accession>P58587</accession>
<keyword id="KW-0963">Cytoplasm</keyword>
<protein>
    <recommendedName>
        <fullName evidence="1">Putative gluconeogenesis factor</fullName>
    </recommendedName>
</protein>
<dbReference type="EMBL" id="AL513382">
    <property type="protein sequence ID" value="CAD05249.1"/>
    <property type="molecule type" value="Genomic_DNA"/>
</dbReference>
<dbReference type="EMBL" id="AE014613">
    <property type="protein sequence ID" value="AAO69704.1"/>
    <property type="molecule type" value="Genomic_DNA"/>
</dbReference>
<dbReference type="RefSeq" id="NP_455342.1">
    <property type="nucleotide sequence ID" value="NC_003198.1"/>
</dbReference>
<dbReference type="SMR" id="P58587"/>
<dbReference type="STRING" id="220341.gene:17584839"/>
<dbReference type="KEGG" id="stt:t2086"/>
<dbReference type="KEGG" id="sty:STY0835"/>
<dbReference type="PATRIC" id="fig|220341.7.peg.840"/>
<dbReference type="eggNOG" id="COG0391">
    <property type="taxonomic scope" value="Bacteria"/>
</dbReference>
<dbReference type="HOGENOM" id="CLU_044041_2_0_6"/>
<dbReference type="OMA" id="LCGDDDW"/>
<dbReference type="OrthoDB" id="9783842at2"/>
<dbReference type="Proteomes" id="UP000000541">
    <property type="component" value="Chromosome"/>
</dbReference>
<dbReference type="Proteomes" id="UP000002670">
    <property type="component" value="Chromosome"/>
</dbReference>
<dbReference type="GO" id="GO:0005737">
    <property type="term" value="C:cytoplasm"/>
    <property type="evidence" value="ECO:0007669"/>
    <property type="project" value="UniProtKB-SubCell"/>
</dbReference>
<dbReference type="GO" id="GO:0043743">
    <property type="term" value="F:LPPG:FO 2-phospho-L-lactate transferase activity"/>
    <property type="evidence" value="ECO:0007669"/>
    <property type="project" value="InterPro"/>
</dbReference>
<dbReference type="GO" id="GO:0008360">
    <property type="term" value="P:regulation of cell shape"/>
    <property type="evidence" value="ECO:0007669"/>
    <property type="project" value="UniProtKB-UniRule"/>
</dbReference>
<dbReference type="CDD" id="cd07187">
    <property type="entry name" value="YvcK_like"/>
    <property type="match status" value="1"/>
</dbReference>
<dbReference type="Gene3D" id="3.40.50.10680">
    <property type="entry name" value="CofD-like domains"/>
    <property type="match status" value="1"/>
</dbReference>
<dbReference type="HAMAP" id="MF_00973">
    <property type="entry name" value="Gluconeogen_factor"/>
    <property type="match status" value="1"/>
</dbReference>
<dbReference type="InterPro" id="IPR002882">
    <property type="entry name" value="CofD"/>
</dbReference>
<dbReference type="InterPro" id="IPR038136">
    <property type="entry name" value="CofD-like_dom_sf"/>
</dbReference>
<dbReference type="InterPro" id="IPR010119">
    <property type="entry name" value="Gluconeogen_factor"/>
</dbReference>
<dbReference type="NCBIfam" id="TIGR01826">
    <property type="entry name" value="CofD_related"/>
    <property type="match status" value="1"/>
</dbReference>
<dbReference type="PANTHER" id="PTHR30135:SF3">
    <property type="entry name" value="GLUCONEOGENESIS FACTOR-RELATED"/>
    <property type="match status" value="1"/>
</dbReference>
<dbReference type="PANTHER" id="PTHR30135">
    <property type="entry name" value="UNCHARACTERIZED PROTEIN YVCK-RELATED"/>
    <property type="match status" value="1"/>
</dbReference>
<dbReference type="Pfam" id="PF01933">
    <property type="entry name" value="CofD"/>
    <property type="match status" value="1"/>
</dbReference>
<dbReference type="SUPFAM" id="SSF142338">
    <property type="entry name" value="CofD-like"/>
    <property type="match status" value="1"/>
</dbReference>
<gene>
    <name type="primary">ybhK</name>
    <name type="ordered locus">STY0835</name>
    <name type="ordered locus">t2086</name>
</gene>
<comment type="function">
    <text evidence="1">Required for morphogenesis under gluconeogenic growth conditions.</text>
</comment>
<comment type="subcellular location">
    <subcellularLocation>
        <location evidence="1">Cytoplasm</location>
    </subcellularLocation>
</comment>
<comment type="similarity">
    <text evidence="1">Belongs to the gluconeogenesis factor family.</text>
</comment>
<evidence type="ECO:0000255" key="1">
    <source>
        <dbReference type="HAMAP-Rule" id="MF_00973"/>
    </source>
</evidence>
<sequence>MRNRTLADLDRVVALGGGHGLGRVLSSLSSLGSRLTGIVTTTDNGGSTGRIRRSEGGIAWGDMRNCLNQLITEPSVASAMFEYRFGGNGELSGHNLGNLMLKALDHLSVRPLEAINLIRNLLKVDAQLIPMSELPVDLMAIDDQGHEIYGEVNIDQLATPPQEIMLTPNVPATREAVQAINDADLILIGPGSFYTSLMPCLLLDELAQALRRTPAPMVYIGNLGRELSLPAASLTLVDKLAMMEQYIGKKVIDTVVVGPRVDVSAVNDRLVIQEVLEASDIPYRHDRQLLHNALEKALQALG</sequence>
<feature type="chain" id="PRO_0000107799" description="Putative gluconeogenesis factor">
    <location>
        <begin position="1"/>
        <end position="302"/>
    </location>
</feature>
<organism>
    <name type="scientific">Salmonella typhi</name>
    <dbReference type="NCBI Taxonomy" id="90370"/>
    <lineage>
        <taxon>Bacteria</taxon>
        <taxon>Pseudomonadati</taxon>
        <taxon>Pseudomonadota</taxon>
        <taxon>Gammaproteobacteria</taxon>
        <taxon>Enterobacterales</taxon>
        <taxon>Enterobacteriaceae</taxon>
        <taxon>Salmonella</taxon>
    </lineage>
</organism>